<protein>
    <recommendedName>
        <fullName>Putative odorant receptor 65c</fullName>
    </recommendedName>
</protein>
<evidence type="ECO:0000250" key="1"/>
<evidence type="ECO:0000255" key="2"/>
<evidence type="ECO:0000305" key="3"/>
<reference key="1">
    <citation type="journal article" date="2000" name="Science">
        <title>The genome sequence of Drosophila melanogaster.</title>
        <authorList>
            <person name="Adams M.D."/>
            <person name="Celniker S.E."/>
            <person name="Holt R.A."/>
            <person name="Evans C.A."/>
            <person name="Gocayne J.D."/>
            <person name="Amanatides P.G."/>
            <person name="Scherer S.E."/>
            <person name="Li P.W."/>
            <person name="Hoskins R.A."/>
            <person name="Galle R.F."/>
            <person name="George R.A."/>
            <person name="Lewis S.E."/>
            <person name="Richards S."/>
            <person name="Ashburner M."/>
            <person name="Henderson S.N."/>
            <person name="Sutton G.G."/>
            <person name="Wortman J.R."/>
            <person name="Yandell M.D."/>
            <person name="Zhang Q."/>
            <person name="Chen L.X."/>
            <person name="Brandon R.C."/>
            <person name="Rogers Y.-H.C."/>
            <person name="Blazej R.G."/>
            <person name="Champe M."/>
            <person name="Pfeiffer B.D."/>
            <person name="Wan K.H."/>
            <person name="Doyle C."/>
            <person name="Baxter E.G."/>
            <person name="Helt G."/>
            <person name="Nelson C.R."/>
            <person name="Miklos G.L.G."/>
            <person name="Abril J.F."/>
            <person name="Agbayani A."/>
            <person name="An H.-J."/>
            <person name="Andrews-Pfannkoch C."/>
            <person name="Baldwin D."/>
            <person name="Ballew R.M."/>
            <person name="Basu A."/>
            <person name="Baxendale J."/>
            <person name="Bayraktaroglu L."/>
            <person name="Beasley E.M."/>
            <person name="Beeson K.Y."/>
            <person name="Benos P.V."/>
            <person name="Berman B.P."/>
            <person name="Bhandari D."/>
            <person name="Bolshakov S."/>
            <person name="Borkova D."/>
            <person name="Botchan M.R."/>
            <person name="Bouck J."/>
            <person name="Brokstein P."/>
            <person name="Brottier P."/>
            <person name="Burtis K.C."/>
            <person name="Busam D.A."/>
            <person name="Butler H."/>
            <person name="Cadieu E."/>
            <person name="Center A."/>
            <person name="Chandra I."/>
            <person name="Cherry J.M."/>
            <person name="Cawley S."/>
            <person name="Dahlke C."/>
            <person name="Davenport L.B."/>
            <person name="Davies P."/>
            <person name="de Pablos B."/>
            <person name="Delcher A."/>
            <person name="Deng Z."/>
            <person name="Mays A.D."/>
            <person name="Dew I."/>
            <person name="Dietz S.M."/>
            <person name="Dodson K."/>
            <person name="Doup L.E."/>
            <person name="Downes M."/>
            <person name="Dugan-Rocha S."/>
            <person name="Dunkov B.C."/>
            <person name="Dunn P."/>
            <person name="Durbin K.J."/>
            <person name="Evangelista C.C."/>
            <person name="Ferraz C."/>
            <person name="Ferriera S."/>
            <person name="Fleischmann W."/>
            <person name="Fosler C."/>
            <person name="Gabrielian A.E."/>
            <person name="Garg N.S."/>
            <person name="Gelbart W.M."/>
            <person name="Glasser K."/>
            <person name="Glodek A."/>
            <person name="Gong F."/>
            <person name="Gorrell J.H."/>
            <person name="Gu Z."/>
            <person name="Guan P."/>
            <person name="Harris M."/>
            <person name="Harris N.L."/>
            <person name="Harvey D.A."/>
            <person name="Heiman T.J."/>
            <person name="Hernandez J.R."/>
            <person name="Houck J."/>
            <person name="Hostin D."/>
            <person name="Houston K.A."/>
            <person name="Howland T.J."/>
            <person name="Wei M.-H."/>
            <person name="Ibegwam C."/>
            <person name="Jalali M."/>
            <person name="Kalush F."/>
            <person name="Karpen G.H."/>
            <person name="Ke Z."/>
            <person name="Kennison J.A."/>
            <person name="Ketchum K.A."/>
            <person name="Kimmel B.E."/>
            <person name="Kodira C.D."/>
            <person name="Kraft C.L."/>
            <person name="Kravitz S."/>
            <person name="Kulp D."/>
            <person name="Lai Z."/>
            <person name="Lasko P."/>
            <person name="Lei Y."/>
            <person name="Levitsky A.A."/>
            <person name="Li J.H."/>
            <person name="Li Z."/>
            <person name="Liang Y."/>
            <person name="Lin X."/>
            <person name="Liu X."/>
            <person name="Mattei B."/>
            <person name="McIntosh T.C."/>
            <person name="McLeod M.P."/>
            <person name="McPherson D."/>
            <person name="Merkulov G."/>
            <person name="Milshina N.V."/>
            <person name="Mobarry C."/>
            <person name="Morris J."/>
            <person name="Moshrefi A."/>
            <person name="Mount S.M."/>
            <person name="Moy M."/>
            <person name="Murphy B."/>
            <person name="Murphy L."/>
            <person name="Muzny D.M."/>
            <person name="Nelson D.L."/>
            <person name="Nelson D.R."/>
            <person name="Nelson K.A."/>
            <person name="Nixon K."/>
            <person name="Nusskern D.R."/>
            <person name="Pacleb J.M."/>
            <person name="Palazzolo M."/>
            <person name="Pittman G.S."/>
            <person name="Pan S."/>
            <person name="Pollard J."/>
            <person name="Puri V."/>
            <person name="Reese M.G."/>
            <person name="Reinert K."/>
            <person name="Remington K."/>
            <person name="Saunders R.D.C."/>
            <person name="Scheeler F."/>
            <person name="Shen H."/>
            <person name="Shue B.C."/>
            <person name="Siden-Kiamos I."/>
            <person name="Simpson M."/>
            <person name="Skupski M.P."/>
            <person name="Smith T.J."/>
            <person name="Spier E."/>
            <person name="Spradling A.C."/>
            <person name="Stapleton M."/>
            <person name="Strong R."/>
            <person name="Sun E."/>
            <person name="Svirskas R."/>
            <person name="Tector C."/>
            <person name="Turner R."/>
            <person name="Venter E."/>
            <person name="Wang A.H."/>
            <person name="Wang X."/>
            <person name="Wang Z.-Y."/>
            <person name="Wassarman D.A."/>
            <person name="Weinstock G.M."/>
            <person name="Weissenbach J."/>
            <person name="Williams S.M."/>
            <person name="Woodage T."/>
            <person name="Worley K.C."/>
            <person name="Wu D."/>
            <person name="Yang S."/>
            <person name="Yao Q.A."/>
            <person name="Ye J."/>
            <person name="Yeh R.-F."/>
            <person name="Zaveri J.S."/>
            <person name="Zhan M."/>
            <person name="Zhang G."/>
            <person name="Zhao Q."/>
            <person name="Zheng L."/>
            <person name="Zheng X.H."/>
            <person name="Zhong F.N."/>
            <person name="Zhong W."/>
            <person name="Zhou X."/>
            <person name="Zhu S.C."/>
            <person name="Zhu X."/>
            <person name="Smith H.O."/>
            <person name="Gibbs R.A."/>
            <person name="Myers E.W."/>
            <person name="Rubin G.M."/>
            <person name="Venter J.C."/>
        </authorList>
    </citation>
    <scope>NUCLEOTIDE SEQUENCE [LARGE SCALE GENOMIC DNA]</scope>
    <source>
        <strain>Berkeley</strain>
    </source>
</reference>
<reference key="2">
    <citation type="journal article" date="2002" name="Genome Biol.">
        <title>Annotation of the Drosophila melanogaster euchromatic genome: a systematic review.</title>
        <authorList>
            <person name="Misra S."/>
            <person name="Crosby M.A."/>
            <person name="Mungall C.J."/>
            <person name="Matthews B.B."/>
            <person name="Campbell K.S."/>
            <person name="Hradecky P."/>
            <person name="Huang Y."/>
            <person name="Kaminker J.S."/>
            <person name="Millburn G.H."/>
            <person name="Prochnik S.E."/>
            <person name="Smith C.D."/>
            <person name="Tupy J.L."/>
            <person name="Whitfield E.J."/>
            <person name="Bayraktaroglu L."/>
            <person name="Berman B.P."/>
            <person name="Bettencourt B.R."/>
            <person name="Celniker S.E."/>
            <person name="de Grey A.D.N.J."/>
            <person name="Drysdale R.A."/>
            <person name="Harris N.L."/>
            <person name="Richter J."/>
            <person name="Russo S."/>
            <person name="Schroeder A.J."/>
            <person name="Shu S.Q."/>
            <person name="Stapleton M."/>
            <person name="Yamada C."/>
            <person name="Ashburner M."/>
            <person name="Gelbart W.M."/>
            <person name="Rubin G.M."/>
            <person name="Lewis S.E."/>
        </authorList>
    </citation>
    <scope>GENOME REANNOTATION</scope>
    <source>
        <strain>Berkeley</strain>
    </source>
</reference>
<comment type="function">
    <text evidence="1">Odorant receptor which mediates acceptance or avoidance behavior, depending on its substrates. The odorant receptor repertoire encodes a large collection of odor stimuli that vary widely in identity, intensity, and duration. May form a complex with Orco to form odorant-sensing units, providing sensitive and prolonged odorant signaling and calcium permeability (By similarity).</text>
</comment>
<comment type="subunit">
    <text evidence="1">Interacts with Orco. Complexes exist early in the endomembrane system in olfactory sensory neurons (OSNs), coupling these complexes to the conserved ciliary trafficking pathway (By similarity).</text>
</comment>
<comment type="subcellular location">
    <subcellularLocation>
        <location evidence="1">Cell membrane</location>
        <topology evidence="1">Multi-pass membrane protein</topology>
    </subcellularLocation>
</comment>
<comment type="miscellaneous">
    <text>The atypical heteromeric and topological design of the odorant receptors appears to be an insect-specific solution for odor recognition, making the OR/Orco complex an attractive target for the development of highly selective insect repellents to disrupt olfactory-mediated host-seeking behaviors of insect disease vectors. Odor-evoked OR currents are independent of known G-protein-coupled second messenger pathways.</text>
</comment>
<comment type="similarity">
    <text evidence="3">Belongs to the insect chemoreceptor superfamily. Heteromeric odorant receptor channel (TC 1.A.69) family. Or49a subfamily.</text>
</comment>
<dbReference type="EMBL" id="AE014296">
    <property type="protein sequence ID" value="AAN12093.2"/>
    <property type="molecule type" value="Genomic_DNA"/>
</dbReference>
<dbReference type="RefSeq" id="NP_729163.2">
    <property type="nucleotide sequence ID" value="NM_168165.2"/>
</dbReference>
<dbReference type="SMR" id="P82984"/>
<dbReference type="FunCoup" id="P82984">
    <property type="interactions" value="18"/>
</dbReference>
<dbReference type="STRING" id="7227.FBpp0076714"/>
<dbReference type="PaxDb" id="7227-FBpp0076714"/>
<dbReference type="EnsemblMetazoa" id="FBtr0077006">
    <property type="protein sequence ID" value="FBpp0076714"/>
    <property type="gene ID" value="FBgn0041623"/>
</dbReference>
<dbReference type="GeneID" id="318013"/>
<dbReference type="KEGG" id="dme:Dmel_CG32403"/>
<dbReference type="AGR" id="FB:FBgn0041623"/>
<dbReference type="CTD" id="318013"/>
<dbReference type="FlyBase" id="FBgn0041623">
    <property type="gene designation" value="Or65c"/>
</dbReference>
<dbReference type="VEuPathDB" id="VectorBase:FBgn0041623"/>
<dbReference type="eggNOG" id="ENOG502SXXU">
    <property type="taxonomic scope" value="Eukaryota"/>
</dbReference>
<dbReference type="GeneTree" id="ENSGT00940000166470"/>
<dbReference type="HOGENOM" id="CLU_055891_1_0_1"/>
<dbReference type="InParanoid" id="P82984"/>
<dbReference type="OMA" id="CFLTMCY"/>
<dbReference type="OrthoDB" id="6604226at2759"/>
<dbReference type="PhylomeDB" id="P82984"/>
<dbReference type="BioGRID-ORCS" id="318013">
    <property type="hits" value="0 hits in 1 CRISPR screen"/>
</dbReference>
<dbReference type="GenomeRNAi" id="318013"/>
<dbReference type="PRO" id="PR:P82984"/>
<dbReference type="Proteomes" id="UP000000803">
    <property type="component" value="Chromosome 3L"/>
</dbReference>
<dbReference type="Bgee" id="FBgn0041623">
    <property type="expression patterns" value="Expressed in adult olfactory receptor neuron Or65 (Drosophila) in antenna and 2 other cell types or tissues"/>
</dbReference>
<dbReference type="ExpressionAtlas" id="P82984">
    <property type="expression patterns" value="baseline and differential"/>
</dbReference>
<dbReference type="GO" id="GO:0034703">
    <property type="term" value="C:cation channel complex"/>
    <property type="evidence" value="ECO:0000250"/>
    <property type="project" value="FlyBase"/>
</dbReference>
<dbReference type="GO" id="GO:0032590">
    <property type="term" value="C:dendrite membrane"/>
    <property type="evidence" value="ECO:0000250"/>
    <property type="project" value="FlyBase"/>
</dbReference>
<dbReference type="GO" id="GO:0005886">
    <property type="term" value="C:plasma membrane"/>
    <property type="evidence" value="ECO:0000250"/>
    <property type="project" value="FlyBase"/>
</dbReference>
<dbReference type="GO" id="GO:0170020">
    <property type="term" value="F:ionotropic olfactory receptor activity"/>
    <property type="evidence" value="ECO:0000250"/>
    <property type="project" value="FlyBase"/>
</dbReference>
<dbReference type="GO" id="GO:0005549">
    <property type="term" value="F:odorant binding"/>
    <property type="evidence" value="ECO:0000250"/>
    <property type="project" value="FlyBase"/>
</dbReference>
<dbReference type="GO" id="GO:0004984">
    <property type="term" value="F:olfactory receptor activity"/>
    <property type="evidence" value="ECO:0000318"/>
    <property type="project" value="GO_Central"/>
</dbReference>
<dbReference type="GO" id="GO:0050911">
    <property type="term" value="P:detection of chemical stimulus involved in sensory perception of smell"/>
    <property type="evidence" value="ECO:0000250"/>
    <property type="project" value="FlyBase"/>
</dbReference>
<dbReference type="GO" id="GO:0007165">
    <property type="term" value="P:signal transduction"/>
    <property type="evidence" value="ECO:0007669"/>
    <property type="project" value="UniProtKB-KW"/>
</dbReference>
<dbReference type="InterPro" id="IPR004117">
    <property type="entry name" value="7tm6_olfct_rcpt"/>
</dbReference>
<dbReference type="PANTHER" id="PTHR21137">
    <property type="entry name" value="ODORANT RECEPTOR"/>
    <property type="match status" value="1"/>
</dbReference>
<dbReference type="PANTHER" id="PTHR21137:SF35">
    <property type="entry name" value="ODORANT RECEPTOR 19A-RELATED"/>
    <property type="match status" value="1"/>
</dbReference>
<dbReference type="Pfam" id="PF02949">
    <property type="entry name" value="7tm_6"/>
    <property type="match status" value="1"/>
</dbReference>
<feature type="chain" id="PRO_0000174261" description="Putative odorant receptor 65c">
    <location>
        <begin position="1"/>
        <end position="410"/>
    </location>
</feature>
<feature type="topological domain" description="Cytoplasmic" evidence="2">
    <location>
        <begin position="1"/>
        <end position="59"/>
    </location>
</feature>
<feature type="transmembrane region" description="Helical; Name=1" evidence="2">
    <location>
        <begin position="60"/>
        <end position="80"/>
    </location>
</feature>
<feature type="topological domain" description="Extracellular" evidence="2">
    <location>
        <begin position="81"/>
        <end position="92"/>
    </location>
</feature>
<feature type="transmembrane region" description="Helical; Name=2" evidence="2">
    <location>
        <begin position="93"/>
        <end position="113"/>
    </location>
</feature>
<feature type="topological domain" description="Cytoplasmic" evidence="2">
    <location>
        <begin position="114"/>
        <end position="148"/>
    </location>
</feature>
<feature type="transmembrane region" description="Helical; Name=3" evidence="2">
    <location>
        <begin position="149"/>
        <end position="169"/>
    </location>
</feature>
<feature type="topological domain" description="Extracellular" evidence="2">
    <location>
        <begin position="170"/>
        <end position="222"/>
    </location>
</feature>
<feature type="transmembrane region" description="Helical; Name=4" evidence="2">
    <location>
        <begin position="223"/>
        <end position="243"/>
    </location>
</feature>
<feature type="topological domain" description="Cytoplasmic" evidence="2">
    <location>
        <begin position="244"/>
        <end position="279"/>
    </location>
</feature>
<feature type="transmembrane region" description="Helical; Name=5" evidence="2">
    <location>
        <begin position="280"/>
        <end position="300"/>
    </location>
</feature>
<feature type="topological domain" description="Extracellular" evidence="2">
    <location>
        <begin position="301"/>
        <end position="312"/>
    </location>
</feature>
<feature type="transmembrane region" description="Helical; Name=6" evidence="2">
    <location>
        <begin position="313"/>
        <end position="333"/>
    </location>
</feature>
<feature type="topological domain" description="Cytoplasmic" evidence="2">
    <location>
        <begin position="334"/>
        <end position="385"/>
    </location>
</feature>
<feature type="transmembrane region" description="Helical; Name=7" evidence="2">
    <location>
        <begin position="386"/>
        <end position="406"/>
    </location>
</feature>
<feature type="topological domain" description="Extracellular" evidence="2">
    <location>
        <begin position="407"/>
        <end position="410"/>
    </location>
</feature>
<gene>
    <name type="primary">Or65c</name>
    <name type="ORF">CG32403</name>
</gene>
<keyword id="KW-1003">Cell membrane</keyword>
<keyword id="KW-0472">Membrane</keyword>
<keyword id="KW-0552">Olfaction</keyword>
<keyword id="KW-0675">Receptor</keyword>
<keyword id="KW-1185">Reference proteome</keyword>
<keyword id="KW-0716">Sensory transduction</keyword>
<keyword id="KW-0807">Transducer</keyword>
<keyword id="KW-0812">Transmembrane</keyword>
<keyword id="KW-1133">Transmembrane helix</keyword>
<accession>P82984</accession>
<organism>
    <name type="scientific">Drosophila melanogaster</name>
    <name type="common">Fruit fly</name>
    <dbReference type="NCBI Taxonomy" id="7227"/>
    <lineage>
        <taxon>Eukaryota</taxon>
        <taxon>Metazoa</taxon>
        <taxon>Ecdysozoa</taxon>
        <taxon>Arthropoda</taxon>
        <taxon>Hexapoda</taxon>
        <taxon>Insecta</taxon>
        <taxon>Pterygota</taxon>
        <taxon>Neoptera</taxon>
        <taxon>Endopterygota</taxon>
        <taxon>Diptera</taxon>
        <taxon>Brachycera</taxon>
        <taxon>Muscomorpha</taxon>
        <taxon>Ephydroidea</taxon>
        <taxon>Drosophilidae</taxon>
        <taxon>Drosophila</taxon>
        <taxon>Sophophora</taxon>
    </lineage>
</organism>
<proteinExistence type="inferred from homology"/>
<name>OR65C_DROME</name>
<sequence>MDIRGNVHRFVKFYIDGWKHFRDPTMESSYSAVYYWREQMKAMFLYTTSKERQMPYRSSWHTLVIIQATVCFLTMCYGVTESLGDKVQMGRDIAFIIGFFYIAFKIYYFQWYGDELDEVVEALETFHPWAQKGPGAVDYRTAKRWYFTLAFFLASSWLVFLCIFILLLITSPLWVHQQILPLHAAFPFQWHEKSIHPISHAFIYLFQTWNVMYFLTWLVCIEGLSVSIYVEITFAIEVLCLELRHLHQRCHGYEQLRLETNRLVQFHQKIVHILDHTNKVFHGTLIMQMGVNFFLVSLSVLEAMEARKDPKVVAQFAVLMLLALGHLSMWSYFGDLLSQKSLTISEAAYEAYDPIKGSKDVYRDLCLIIRRGQEPLIMRASPFPSFNFINYSAILNQCYGILTFLLKTLD</sequence>